<accession>D4B3I5</accession>
<evidence type="ECO:0000255" key="1"/>
<evidence type="ECO:0000256" key="2">
    <source>
        <dbReference type="SAM" id="MobiDB-lite"/>
    </source>
</evidence>
<evidence type="ECO:0000269" key="3">
    <source>
    </source>
</evidence>
<evidence type="ECO:0000305" key="4"/>
<sequence length="256" mass="25258">MVATKSVLSAVALAGVAAAETIDVMVGQGGLKFVPDNIKAKAGDEVVFHFVMGHHDVTLGRYDSPCMPIQGESIWSGVVDTVEKGKGVTFTVPIHDDKTKWIYCSVAKHCQNGMSLVINEPSSGDNQADYKDRAKIVPQSGSPTQVKGGTLGGSGGSGGSSSSSASSSGSSSGTTSAPTPTGGHSSSHPSSTSGSDSSNTQSTPDATLIPSGSIPSATGSGSHSSTPTASPGAAAGLKGSAVLAGVVALGAWIGLL</sequence>
<comment type="subcellular location">
    <subcellularLocation>
        <location evidence="1">Cell membrane</location>
        <topology evidence="1">Lipid-anchor</topology>
        <topology evidence="1">GPI-anchor</topology>
    </subcellularLocation>
    <subcellularLocation>
        <location evidence="3">Secreted</location>
    </subcellularLocation>
</comment>
<feature type="signal peptide" evidence="1">
    <location>
        <begin position="1"/>
        <end position="19"/>
    </location>
</feature>
<feature type="chain" id="PRO_0000434483" description="Extracellular serine-rich protein ARB_03024" evidence="1">
    <location>
        <begin position="20"/>
        <end position="233"/>
    </location>
</feature>
<feature type="propeptide" id="PRO_0000434484" description="Removed in mature form" evidence="1">
    <location>
        <begin position="234"/>
        <end position="256"/>
    </location>
</feature>
<feature type="region of interest" description="Disordered" evidence="2">
    <location>
        <begin position="135"/>
        <end position="235"/>
    </location>
</feature>
<feature type="compositionally biased region" description="Gly residues" evidence="2">
    <location>
        <begin position="149"/>
        <end position="159"/>
    </location>
</feature>
<feature type="compositionally biased region" description="Low complexity" evidence="2">
    <location>
        <begin position="160"/>
        <end position="204"/>
    </location>
</feature>
<feature type="compositionally biased region" description="Low complexity" evidence="2">
    <location>
        <begin position="215"/>
        <end position="235"/>
    </location>
</feature>
<feature type="lipid moiety-binding region" description="GPI-anchor amidated alanine" evidence="1">
    <location>
        <position position="233"/>
    </location>
</feature>
<organism>
    <name type="scientific">Arthroderma benhamiae (strain ATCC MYA-4681 / CBS 112371)</name>
    <name type="common">Trichophyton mentagrophytes</name>
    <dbReference type="NCBI Taxonomy" id="663331"/>
    <lineage>
        <taxon>Eukaryota</taxon>
        <taxon>Fungi</taxon>
        <taxon>Dikarya</taxon>
        <taxon>Ascomycota</taxon>
        <taxon>Pezizomycotina</taxon>
        <taxon>Eurotiomycetes</taxon>
        <taxon>Eurotiomycetidae</taxon>
        <taxon>Onygenales</taxon>
        <taxon>Arthrodermataceae</taxon>
        <taxon>Trichophyton</taxon>
    </lineage>
</organism>
<name>A3024_ARTBC</name>
<keyword id="KW-1003">Cell membrane</keyword>
<keyword id="KW-0325">Glycoprotein</keyword>
<keyword id="KW-0336">GPI-anchor</keyword>
<keyword id="KW-0449">Lipoprotein</keyword>
<keyword id="KW-0472">Membrane</keyword>
<keyword id="KW-1185">Reference proteome</keyword>
<keyword id="KW-0964">Secreted</keyword>
<keyword id="KW-0732">Signal</keyword>
<proteinExistence type="evidence at protein level"/>
<reference key="1">
    <citation type="journal article" date="2011" name="Genome Biol.">
        <title>Comparative and functional genomics provide insights into the pathogenicity of dermatophytic fungi.</title>
        <authorList>
            <person name="Burmester A."/>
            <person name="Shelest E."/>
            <person name="Gloeckner G."/>
            <person name="Heddergott C."/>
            <person name="Schindler S."/>
            <person name="Staib P."/>
            <person name="Heidel A."/>
            <person name="Felder M."/>
            <person name="Petzold A."/>
            <person name="Szafranski K."/>
            <person name="Feuermann M."/>
            <person name="Pedruzzi I."/>
            <person name="Priebe S."/>
            <person name="Groth M."/>
            <person name="Winkler R."/>
            <person name="Li W."/>
            <person name="Kniemeyer O."/>
            <person name="Schroeckh V."/>
            <person name="Hertweck C."/>
            <person name="Hube B."/>
            <person name="White T.C."/>
            <person name="Platzer M."/>
            <person name="Guthke R."/>
            <person name="Heitman J."/>
            <person name="Woestemeyer J."/>
            <person name="Zipfel P.F."/>
            <person name="Monod M."/>
            <person name="Brakhage A.A."/>
        </authorList>
    </citation>
    <scope>NUCLEOTIDE SEQUENCE [LARGE SCALE GENOMIC DNA]</scope>
    <source>
        <strain>ATCC MYA-4681 / CBS 112371</strain>
    </source>
</reference>
<reference key="2">
    <citation type="journal article" date="2011" name="Proteomics">
        <title>Identification of novel secreted proteases during extracellular proteolysis by dermatophytes at acidic pH.</title>
        <authorList>
            <person name="Sriranganadane D."/>
            <person name="Waridel P."/>
            <person name="Salamin K."/>
            <person name="Feuermann M."/>
            <person name="Mignon B."/>
            <person name="Staib P."/>
            <person name="Neuhaus J.M."/>
            <person name="Quadroni M."/>
            <person name="Monod M."/>
        </authorList>
    </citation>
    <scope>IDENTIFICATION BY MASS SPECTROMETRY</scope>
    <scope>SUBCELLULAR LOCATION</scope>
</reference>
<dbReference type="EMBL" id="ABSU01000034">
    <property type="protein sequence ID" value="EFE29683.1"/>
    <property type="molecule type" value="Genomic_DNA"/>
</dbReference>
<dbReference type="RefSeq" id="XP_003010323.1">
    <property type="nucleotide sequence ID" value="XM_003010277.1"/>
</dbReference>
<dbReference type="STRING" id="663331.D4B3I5"/>
<dbReference type="GeneID" id="9525593"/>
<dbReference type="KEGG" id="abe:ARB_03024"/>
<dbReference type="eggNOG" id="ENOG502T37Y">
    <property type="taxonomic scope" value="Eukaryota"/>
</dbReference>
<dbReference type="HOGENOM" id="CLU_053381_1_1_1"/>
<dbReference type="OMA" id="SEDPIWY"/>
<dbReference type="OrthoDB" id="2331100at2759"/>
<dbReference type="Proteomes" id="UP000008866">
    <property type="component" value="Unassembled WGS sequence"/>
</dbReference>
<dbReference type="GO" id="GO:0005576">
    <property type="term" value="C:extracellular region"/>
    <property type="evidence" value="ECO:0007669"/>
    <property type="project" value="UniProtKB-SubCell"/>
</dbReference>
<dbReference type="GO" id="GO:0005886">
    <property type="term" value="C:plasma membrane"/>
    <property type="evidence" value="ECO:0007669"/>
    <property type="project" value="UniProtKB-SubCell"/>
</dbReference>
<dbReference type="GO" id="GO:0098552">
    <property type="term" value="C:side of membrane"/>
    <property type="evidence" value="ECO:0007669"/>
    <property type="project" value="UniProtKB-KW"/>
</dbReference>
<dbReference type="CDD" id="cd00920">
    <property type="entry name" value="Cupredoxin"/>
    <property type="match status" value="1"/>
</dbReference>
<dbReference type="Gene3D" id="2.60.40.420">
    <property type="entry name" value="Cupredoxins - blue copper proteins"/>
    <property type="match status" value="1"/>
</dbReference>
<dbReference type="InterPro" id="IPR008972">
    <property type="entry name" value="Cupredoxin"/>
</dbReference>
<dbReference type="InterPro" id="IPR052953">
    <property type="entry name" value="Ser-rich/MCO-related"/>
</dbReference>
<dbReference type="PANTHER" id="PTHR34883:SF17">
    <property type="entry name" value="CUPREDOXIN"/>
    <property type="match status" value="1"/>
</dbReference>
<dbReference type="PANTHER" id="PTHR34883">
    <property type="entry name" value="SERINE-RICH PROTEIN, PUTATIVE-RELATED-RELATED"/>
    <property type="match status" value="1"/>
</dbReference>
<dbReference type="SUPFAM" id="SSF49503">
    <property type="entry name" value="Cupredoxins"/>
    <property type="match status" value="1"/>
</dbReference>
<protein>
    <recommendedName>
        <fullName evidence="4">Extracellular serine-rich protein ARB_03024</fullName>
    </recommendedName>
</protein>
<gene>
    <name type="ORF">ARB_03024</name>
</gene>